<evidence type="ECO:0000255" key="1">
    <source>
        <dbReference type="HAMAP-Rule" id="MF_01334"/>
    </source>
</evidence>
<evidence type="ECO:0000256" key="2">
    <source>
        <dbReference type="SAM" id="MobiDB-lite"/>
    </source>
</evidence>
<evidence type="ECO:0000305" key="3"/>
<reference key="1">
    <citation type="journal article" date="2001" name="Science">
        <title>Comparative genomics of Listeria species.</title>
        <authorList>
            <person name="Glaser P."/>
            <person name="Frangeul L."/>
            <person name="Buchrieser C."/>
            <person name="Rusniok C."/>
            <person name="Amend A."/>
            <person name="Baquero F."/>
            <person name="Berche P."/>
            <person name="Bloecker H."/>
            <person name="Brandt P."/>
            <person name="Chakraborty T."/>
            <person name="Charbit A."/>
            <person name="Chetouani F."/>
            <person name="Couve E."/>
            <person name="de Daruvar A."/>
            <person name="Dehoux P."/>
            <person name="Domann E."/>
            <person name="Dominguez-Bernal G."/>
            <person name="Duchaud E."/>
            <person name="Durant L."/>
            <person name="Dussurget O."/>
            <person name="Entian K.-D."/>
            <person name="Fsihi H."/>
            <person name="Garcia-del Portillo F."/>
            <person name="Garrido P."/>
            <person name="Gautier L."/>
            <person name="Goebel W."/>
            <person name="Gomez-Lopez N."/>
            <person name="Hain T."/>
            <person name="Hauf J."/>
            <person name="Jackson D."/>
            <person name="Jones L.-M."/>
            <person name="Kaerst U."/>
            <person name="Kreft J."/>
            <person name="Kuhn M."/>
            <person name="Kunst F."/>
            <person name="Kurapkat G."/>
            <person name="Madueno E."/>
            <person name="Maitournam A."/>
            <person name="Mata Vicente J."/>
            <person name="Ng E."/>
            <person name="Nedjari H."/>
            <person name="Nordsiek G."/>
            <person name="Novella S."/>
            <person name="de Pablos B."/>
            <person name="Perez-Diaz J.-C."/>
            <person name="Purcell R."/>
            <person name="Remmel B."/>
            <person name="Rose M."/>
            <person name="Schlueter T."/>
            <person name="Simoes N."/>
            <person name="Tierrez A."/>
            <person name="Vazquez-Boland J.-A."/>
            <person name="Voss H."/>
            <person name="Wehland J."/>
            <person name="Cossart P."/>
        </authorList>
    </citation>
    <scope>NUCLEOTIDE SEQUENCE [LARGE SCALE GENOMIC DNA]</scope>
    <source>
        <strain>ATCC BAA-680 / CLIP 11262</strain>
    </source>
</reference>
<sequence>MATTLEVQKRETTQHSEVTRLRSEGKVPGIIYGYKSENVPVSVDSLELIKAVRDNGRNAVFSVTVDGKKLNVLLHEYQVDPLKDVLVHVDLLAVDMNEEVETDVRVVLVGDAPGVKAGGVLQQIIHDVKVSATPEKLPETIELDISSLEIGDVLTTNDLPENKDYVVQAEEEETVVTVSAPRAEEEPTTTEAPEPEAVHGNDEEPVE</sequence>
<organism>
    <name type="scientific">Listeria innocua serovar 6a (strain ATCC BAA-680 / CLIP 11262)</name>
    <dbReference type="NCBI Taxonomy" id="272626"/>
    <lineage>
        <taxon>Bacteria</taxon>
        <taxon>Bacillati</taxon>
        <taxon>Bacillota</taxon>
        <taxon>Bacilli</taxon>
        <taxon>Bacillales</taxon>
        <taxon>Listeriaceae</taxon>
        <taxon>Listeria</taxon>
    </lineage>
</organism>
<dbReference type="EMBL" id="AL596164">
    <property type="protein sequence ID" value="CAC95476.1"/>
    <property type="molecule type" value="Genomic_DNA"/>
</dbReference>
<dbReference type="PIR" id="AD1463">
    <property type="entry name" value="AD1463"/>
</dbReference>
<dbReference type="RefSeq" id="WP_003760021.1">
    <property type="nucleotide sequence ID" value="NC_003212.1"/>
</dbReference>
<dbReference type="SMR" id="Q92F64"/>
<dbReference type="STRING" id="272626.gene:17564555"/>
<dbReference type="KEGG" id="lin:ctc"/>
<dbReference type="eggNOG" id="COG1825">
    <property type="taxonomic scope" value="Bacteria"/>
</dbReference>
<dbReference type="HOGENOM" id="CLU_075939_2_0_9"/>
<dbReference type="OrthoDB" id="9790002at2"/>
<dbReference type="Proteomes" id="UP000002513">
    <property type="component" value="Chromosome"/>
</dbReference>
<dbReference type="GO" id="GO:0022625">
    <property type="term" value="C:cytosolic large ribosomal subunit"/>
    <property type="evidence" value="ECO:0007669"/>
    <property type="project" value="TreeGrafter"/>
</dbReference>
<dbReference type="GO" id="GO:0008097">
    <property type="term" value="F:5S rRNA binding"/>
    <property type="evidence" value="ECO:0007669"/>
    <property type="project" value="InterPro"/>
</dbReference>
<dbReference type="GO" id="GO:0003735">
    <property type="term" value="F:structural constituent of ribosome"/>
    <property type="evidence" value="ECO:0007669"/>
    <property type="project" value="InterPro"/>
</dbReference>
<dbReference type="GO" id="GO:0006412">
    <property type="term" value="P:translation"/>
    <property type="evidence" value="ECO:0007669"/>
    <property type="project" value="UniProtKB-UniRule"/>
</dbReference>
<dbReference type="CDD" id="cd00495">
    <property type="entry name" value="Ribosomal_L25_TL5_CTC"/>
    <property type="match status" value="1"/>
</dbReference>
<dbReference type="FunFam" id="2.40.240.10:FF:000013">
    <property type="entry name" value="50S ribosomal protein L25"/>
    <property type="match status" value="1"/>
</dbReference>
<dbReference type="Gene3D" id="2.170.120.20">
    <property type="entry name" value="Ribosomal protein L25, beta domain"/>
    <property type="match status" value="1"/>
</dbReference>
<dbReference type="Gene3D" id="2.40.240.10">
    <property type="entry name" value="Ribosomal Protein L25, Chain P"/>
    <property type="match status" value="1"/>
</dbReference>
<dbReference type="HAMAP" id="MF_01334">
    <property type="entry name" value="Ribosomal_bL25_CTC"/>
    <property type="match status" value="1"/>
</dbReference>
<dbReference type="InterPro" id="IPR020056">
    <property type="entry name" value="Rbsml_bL25/Gln-tRNA_synth_N"/>
</dbReference>
<dbReference type="InterPro" id="IPR011035">
    <property type="entry name" value="Ribosomal_bL25/Gln-tRNA_synth"/>
</dbReference>
<dbReference type="InterPro" id="IPR020057">
    <property type="entry name" value="Ribosomal_bL25_b-dom"/>
</dbReference>
<dbReference type="InterPro" id="IPR037121">
    <property type="entry name" value="Ribosomal_bL25_C"/>
</dbReference>
<dbReference type="InterPro" id="IPR001021">
    <property type="entry name" value="Ribosomal_bL25_long"/>
</dbReference>
<dbReference type="InterPro" id="IPR029751">
    <property type="entry name" value="Ribosomal_L25_dom"/>
</dbReference>
<dbReference type="InterPro" id="IPR020930">
    <property type="entry name" value="Ribosomal_uL5_bac-type"/>
</dbReference>
<dbReference type="NCBIfam" id="TIGR00731">
    <property type="entry name" value="bL25_bact_ctc"/>
    <property type="match status" value="1"/>
</dbReference>
<dbReference type="NCBIfam" id="NF004133">
    <property type="entry name" value="PRK05618.2-4"/>
    <property type="match status" value="1"/>
</dbReference>
<dbReference type="PANTHER" id="PTHR33284">
    <property type="entry name" value="RIBOSOMAL PROTEIN L25/GLN-TRNA SYNTHETASE, ANTI-CODON-BINDING DOMAIN-CONTAINING PROTEIN"/>
    <property type="match status" value="1"/>
</dbReference>
<dbReference type="PANTHER" id="PTHR33284:SF1">
    <property type="entry name" value="RIBOSOMAL PROTEIN L25_GLN-TRNA SYNTHETASE, ANTI-CODON-BINDING DOMAIN-CONTAINING PROTEIN"/>
    <property type="match status" value="1"/>
</dbReference>
<dbReference type="Pfam" id="PF01386">
    <property type="entry name" value="Ribosomal_L25p"/>
    <property type="match status" value="1"/>
</dbReference>
<dbReference type="Pfam" id="PF14693">
    <property type="entry name" value="Ribosomal_TL5_C"/>
    <property type="match status" value="1"/>
</dbReference>
<dbReference type="SUPFAM" id="SSF50715">
    <property type="entry name" value="Ribosomal protein L25-like"/>
    <property type="match status" value="1"/>
</dbReference>
<accession>Q92F64</accession>
<feature type="chain" id="PRO_0000181563" description="Large ribosomal subunit protein bL25">
    <location>
        <begin position="1"/>
        <end position="207"/>
    </location>
</feature>
<feature type="region of interest" description="Disordered" evidence="2">
    <location>
        <begin position="171"/>
        <end position="207"/>
    </location>
</feature>
<feature type="compositionally biased region" description="Basic and acidic residues" evidence="2">
    <location>
        <begin position="196"/>
        <end position="207"/>
    </location>
</feature>
<protein>
    <recommendedName>
        <fullName evidence="1">Large ribosomal subunit protein bL25</fullName>
    </recommendedName>
    <alternativeName>
        <fullName evidence="3">50S ribosomal protein L25</fullName>
    </alternativeName>
    <alternativeName>
        <fullName evidence="1">General stress protein CTC</fullName>
    </alternativeName>
</protein>
<keyword id="KW-0687">Ribonucleoprotein</keyword>
<keyword id="KW-0689">Ribosomal protein</keyword>
<keyword id="KW-0694">RNA-binding</keyword>
<keyword id="KW-0699">rRNA-binding</keyword>
<comment type="function">
    <text evidence="1">This is one of the proteins that binds to the 5S RNA in the ribosome where it forms part of the central protuberance.</text>
</comment>
<comment type="subunit">
    <text evidence="1">Part of the 50S ribosomal subunit; part of the 5S rRNA/L5/L18/L25 subcomplex. Contacts the 5S rRNA. Binds to the 5S rRNA independently of L5 and L18.</text>
</comment>
<comment type="similarity">
    <text evidence="1">Belongs to the bacterial ribosomal protein bL25 family. CTC subfamily.</text>
</comment>
<gene>
    <name evidence="1" type="primary">rplY</name>
    <name evidence="1" type="synonym">ctc</name>
    <name type="ordered locus">lin0243</name>
</gene>
<proteinExistence type="inferred from homology"/>
<name>RL25_LISIN</name>